<feature type="chain" id="PRO_0000080139" description="Fructokinase">
    <location>
        <begin position="1"/>
        <end position="319"/>
    </location>
</feature>
<organism>
    <name type="scientific">Solanum tuberosum</name>
    <name type="common">Potato</name>
    <dbReference type="NCBI Taxonomy" id="4113"/>
    <lineage>
        <taxon>Eukaryota</taxon>
        <taxon>Viridiplantae</taxon>
        <taxon>Streptophyta</taxon>
        <taxon>Embryophyta</taxon>
        <taxon>Tracheophyta</taxon>
        <taxon>Spermatophyta</taxon>
        <taxon>Magnoliopsida</taxon>
        <taxon>eudicotyledons</taxon>
        <taxon>Gunneridae</taxon>
        <taxon>Pentapetalae</taxon>
        <taxon>asterids</taxon>
        <taxon>lamiids</taxon>
        <taxon>Solanales</taxon>
        <taxon>Solanaceae</taxon>
        <taxon>Solanoideae</taxon>
        <taxon>Solaneae</taxon>
        <taxon>Solanum</taxon>
    </lineage>
</organism>
<proteinExistence type="evidence at transcript level"/>
<protein>
    <recommendedName>
        <fullName>Fructokinase</fullName>
        <ecNumber>2.7.1.4</ecNumber>
    </recommendedName>
</protein>
<sequence>MAVNGSALSSGLIVSFGEMLIDFVPTVSGVSLAEAPGFLKAPGGAPANVAIAVTRLGGKSAFVGKLGDDEFGHMLAGILKTNGVQADGINFDKGARTALAFVTLRADGEREFMFYRNPSADMLLTPDELNLDLIRSAKVFHYGSISLIVEPCRSAHLKAMEVAKEAGALLSYDPNLRLPLWSSEAEARKAIKVSDVELEFLTGSDKIDDESAMSLWHPNLKLLLVTLGEKGCNYYTKKFHGSVGGFHVKTVDTTGAGDSFVGALLTKIVDDQAILEDEARLKEVLRFSCACGAITTTKKGAIPALPTESEALTLLKGGA</sequence>
<accession>P37829</accession>
<keyword id="KW-0067">ATP-binding</keyword>
<keyword id="KW-0119">Carbohydrate metabolism</keyword>
<keyword id="KW-0418">Kinase</keyword>
<keyword id="KW-0547">Nucleotide-binding</keyword>
<keyword id="KW-1185">Reference proteome</keyword>
<keyword id="KW-0808">Transferase</keyword>
<name>SCRK_SOLTU</name>
<dbReference type="EC" id="2.7.1.4"/>
<dbReference type="EMBL" id="Z12823">
    <property type="protein sequence ID" value="CAA78283.1"/>
    <property type="molecule type" value="mRNA"/>
</dbReference>
<dbReference type="PIR" id="S39997">
    <property type="entry name" value="S39997"/>
</dbReference>
<dbReference type="SMR" id="P37829"/>
<dbReference type="FunCoup" id="P37829">
    <property type="interactions" value="619"/>
</dbReference>
<dbReference type="STRING" id="4113.P37829"/>
<dbReference type="PaxDb" id="4113-PGSC0003DMT400069198"/>
<dbReference type="ProMEX" id="P37829"/>
<dbReference type="eggNOG" id="KOG2855">
    <property type="taxonomic scope" value="Eukaryota"/>
</dbReference>
<dbReference type="InParanoid" id="P37829"/>
<dbReference type="BRENDA" id="2.7.1.4">
    <property type="organism ID" value="5757"/>
</dbReference>
<dbReference type="SABIO-RK" id="P37829"/>
<dbReference type="UniPathway" id="UPA00152"/>
<dbReference type="Proteomes" id="UP000011115">
    <property type="component" value="Unassembled WGS sequence"/>
</dbReference>
<dbReference type="ExpressionAtlas" id="P37829">
    <property type="expression patterns" value="baseline"/>
</dbReference>
<dbReference type="GO" id="GO:0005829">
    <property type="term" value="C:cytosol"/>
    <property type="evidence" value="ECO:0000318"/>
    <property type="project" value="GO_Central"/>
</dbReference>
<dbReference type="GO" id="GO:0005524">
    <property type="term" value="F:ATP binding"/>
    <property type="evidence" value="ECO:0007669"/>
    <property type="project" value="UniProtKB-KW"/>
</dbReference>
<dbReference type="GO" id="GO:0008865">
    <property type="term" value="F:fructokinase activity"/>
    <property type="evidence" value="ECO:0000318"/>
    <property type="project" value="GO_Central"/>
</dbReference>
<dbReference type="GO" id="GO:0006000">
    <property type="term" value="P:fructose metabolic process"/>
    <property type="evidence" value="ECO:0000318"/>
    <property type="project" value="GO_Central"/>
</dbReference>
<dbReference type="GO" id="GO:0019252">
    <property type="term" value="P:starch biosynthetic process"/>
    <property type="evidence" value="ECO:0007669"/>
    <property type="project" value="UniProtKB-UniPathway"/>
</dbReference>
<dbReference type="CDD" id="cd01167">
    <property type="entry name" value="bac_FRK"/>
    <property type="match status" value="1"/>
</dbReference>
<dbReference type="FunFam" id="3.40.1190.20:FF:000005">
    <property type="entry name" value="Probable fructokinase-2"/>
    <property type="match status" value="1"/>
</dbReference>
<dbReference type="Gene3D" id="3.40.1190.20">
    <property type="match status" value="1"/>
</dbReference>
<dbReference type="InterPro" id="IPR002173">
    <property type="entry name" value="Carboh/pur_kinase_PfkB_CS"/>
</dbReference>
<dbReference type="InterPro" id="IPR050306">
    <property type="entry name" value="PfkB_Carbo_kinase"/>
</dbReference>
<dbReference type="InterPro" id="IPR011611">
    <property type="entry name" value="PfkB_dom"/>
</dbReference>
<dbReference type="InterPro" id="IPR002139">
    <property type="entry name" value="Ribo/fructo_kinase"/>
</dbReference>
<dbReference type="InterPro" id="IPR029056">
    <property type="entry name" value="Ribokinase-like"/>
</dbReference>
<dbReference type="PANTHER" id="PTHR43085:SF24">
    <property type="entry name" value="FRUCTOKINASE-4-RELATED"/>
    <property type="match status" value="1"/>
</dbReference>
<dbReference type="PANTHER" id="PTHR43085">
    <property type="entry name" value="HEXOKINASE FAMILY MEMBER"/>
    <property type="match status" value="1"/>
</dbReference>
<dbReference type="Pfam" id="PF00294">
    <property type="entry name" value="PfkB"/>
    <property type="match status" value="1"/>
</dbReference>
<dbReference type="PRINTS" id="PR00990">
    <property type="entry name" value="RIBOKINASE"/>
</dbReference>
<dbReference type="SUPFAM" id="SSF53613">
    <property type="entry name" value="Ribokinase-like"/>
    <property type="match status" value="1"/>
</dbReference>
<dbReference type="PROSITE" id="PS00583">
    <property type="entry name" value="PFKB_KINASES_1"/>
    <property type="match status" value="1"/>
</dbReference>
<dbReference type="PROSITE" id="PS00584">
    <property type="entry name" value="PFKB_KINASES_2"/>
    <property type="match status" value="1"/>
</dbReference>
<reference key="1">
    <citation type="journal article" date="1993" name="Plant Physiol.">
        <title>Primary structure and characterization of a cDNA clone of fructokinase from potato (Solanum tuberosum L. cv record).</title>
        <authorList>
            <person name="Smith S.B."/>
            <person name="Taylor M.A."/>
            <person name="Burch L.R."/>
            <person name="Davies H.V."/>
        </authorList>
    </citation>
    <scope>NUCLEOTIDE SEQUENCE [MRNA]</scope>
    <source>
        <strain>cv. Record</strain>
    </source>
</reference>
<comment type="function">
    <text>May play an important role in maintaining the flux of carbon towards starch formation.</text>
</comment>
<comment type="catalytic activity">
    <reaction>
        <text>D-fructose + ATP = D-fructose 6-phosphate + ADP + H(+)</text>
        <dbReference type="Rhea" id="RHEA:16125"/>
        <dbReference type="ChEBI" id="CHEBI:15378"/>
        <dbReference type="ChEBI" id="CHEBI:30616"/>
        <dbReference type="ChEBI" id="CHEBI:37721"/>
        <dbReference type="ChEBI" id="CHEBI:61527"/>
        <dbReference type="ChEBI" id="CHEBI:456216"/>
        <dbReference type="EC" id="2.7.1.4"/>
    </reaction>
</comment>
<comment type="pathway">
    <text>Glycan biosynthesis; starch biosynthesis.</text>
</comment>
<comment type="tissue specificity">
    <text>Expressed in swelling stolons and, at higher levels, in developing tubers. Low levels found in leaves and stems from tuberizing plants.</text>
</comment>
<comment type="similarity">
    <text evidence="1">Belongs to the carbohydrate kinase PfkB family.</text>
</comment>
<evidence type="ECO:0000305" key="1"/>